<evidence type="ECO:0000255" key="1">
    <source>
        <dbReference type="HAMAP-Rule" id="MF_00719"/>
    </source>
</evidence>
<protein>
    <recommendedName>
        <fullName evidence="1">Adenosylcobinamide-GDP ribazoletransferase</fullName>
        <ecNumber evidence="1">2.7.8.26</ecNumber>
    </recommendedName>
    <alternativeName>
        <fullName evidence="1">Cobalamin synthase</fullName>
    </alternativeName>
    <alternativeName>
        <fullName evidence="1">Cobalamin-5'-phosphate synthase</fullName>
    </alternativeName>
</protein>
<proteinExistence type="inferred from homology"/>
<reference key="1">
    <citation type="journal article" date="2009" name="Environ. Microbiol.">
        <title>Contribution of mobile genetic elements to Desulfovibrio vulgaris genome plasticity.</title>
        <authorList>
            <person name="Walker C.B."/>
            <person name="Stolyar S."/>
            <person name="Chivian D."/>
            <person name="Pinel N."/>
            <person name="Gabster J.A."/>
            <person name="Dehal P.S."/>
            <person name="He Z."/>
            <person name="Yang Z.K."/>
            <person name="Yen H.C."/>
            <person name="Zhou J."/>
            <person name="Wall J.D."/>
            <person name="Hazen T.C."/>
            <person name="Arkin A.P."/>
            <person name="Stahl D.A."/>
        </authorList>
    </citation>
    <scope>NUCLEOTIDE SEQUENCE [LARGE SCALE GENOMIC DNA]</scope>
    <source>
        <strain>DP4</strain>
    </source>
</reference>
<sequence>MPTFLHHALLACGFLTRLVPARVATADDMAAAVRWFPLAGLVVGGACWLPFALGLAASHPAIQAWLYVLINLWVTRGLHWDGVADLADAWGSSATGERFWDILKDSRIGAFGVMGLLLGFGGQYIGAHEIFISGRLGVLIAAPIVGRGACVILAALVPPGSRSTLGRLTCAGADRIAIGVAATCGILVLLLTTPVMTTVTTIAICGAIVTALAHLARREGGINGDFMGACIAGCEGAVLLAASMG</sequence>
<keyword id="KW-0997">Cell inner membrane</keyword>
<keyword id="KW-1003">Cell membrane</keyword>
<keyword id="KW-0169">Cobalamin biosynthesis</keyword>
<keyword id="KW-0460">Magnesium</keyword>
<keyword id="KW-0472">Membrane</keyword>
<keyword id="KW-0808">Transferase</keyword>
<keyword id="KW-0812">Transmembrane</keyword>
<keyword id="KW-1133">Transmembrane helix</keyword>
<dbReference type="EC" id="2.7.8.26" evidence="1"/>
<dbReference type="EMBL" id="CP000527">
    <property type="protein sequence ID" value="ABM29086.1"/>
    <property type="molecule type" value="Genomic_DNA"/>
</dbReference>
<dbReference type="RefSeq" id="WP_011792636.1">
    <property type="nucleotide sequence ID" value="NC_008751.1"/>
</dbReference>
<dbReference type="KEGG" id="dvl:Dvul_2070"/>
<dbReference type="HOGENOM" id="CLU_057426_1_2_7"/>
<dbReference type="UniPathway" id="UPA00148">
    <property type="reaction ID" value="UER00238"/>
</dbReference>
<dbReference type="Proteomes" id="UP000009173">
    <property type="component" value="Chromosome"/>
</dbReference>
<dbReference type="GO" id="GO:0005886">
    <property type="term" value="C:plasma membrane"/>
    <property type="evidence" value="ECO:0007669"/>
    <property type="project" value="UniProtKB-SubCell"/>
</dbReference>
<dbReference type="GO" id="GO:0051073">
    <property type="term" value="F:adenosylcobinamide-GDP ribazoletransferase activity"/>
    <property type="evidence" value="ECO:0007669"/>
    <property type="project" value="UniProtKB-UniRule"/>
</dbReference>
<dbReference type="GO" id="GO:0008818">
    <property type="term" value="F:cobalamin 5'-phosphate synthase activity"/>
    <property type="evidence" value="ECO:0007669"/>
    <property type="project" value="UniProtKB-UniRule"/>
</dbReference>
<dbReference type="GO" id="GO:0009236">
    <property type="term" value="P:cobalamin biosynthetic process"/>
    <property type="evidence" value="ECO:0007669"/>
    <property type="project" value="UniProtKB-UniRule"/>
</dbReference>
<dbReference type="HAMAP" id="MF_00719">
    <property type="entry name" value="CobS"/>
    <property type="match status" value="1"/>
</dbReference>
<dbReference type="InterPro" id="IPR003805">
    <property type="entry name" value="CobS"/>
</dbReference>
<dbReference type="PANTHER" id="PTHR34148">
    <property type="entry name" value="ADENOSYLCOBINAMIDE-GDP RIBAZOLETRANSFERASE"/>
    <property type="match status" value="1"/>
</dbReference>
<dbReference type="PANTHER" id="PTHR34148:SF1">
    <property type="entry name" value="ADENOSYLCOBINAMIDE-GDP RIBAZOLETRANSFERASE"/>
    <property type="match status" value="1"/>
</dbReference>
<dbReference type="Pfam" id="PF02654">
    <property type="entry name" value="CobS"/>
    <property type="match status" value="1"/>
</dbReference>
<accession>A1VF70</accession>
<gene>
    <name evidence="1" type="primary">cobS</name>
    <name type="ordered locus">Dvul_2070</name>
</gene>
<feature type="chain" id="PRO_1000132573" description="Adenosylcobinamide-GDP ribazoletransferase">
    <location>
        <begin position="1"/>
        <end position="245"/>
    </location>
</feature>
<feature type="transmembrane region" description="Helical" evidence="1">
    <location>
        <begin position="35"/>
        <end position="55"/>
    </location>
</feature>
<feature type="transmembrane region" description="Helical" evidence="1">
    <location>
        <begin position="108"/>
        <end position="128"/>
    </location>
</feature>
<feature type="transmembrane region" description="Helical" evidence="1">
    <location>
        <begin position="137"/>
        <end position="157"/>
    </location>
</feature>
<feature type="transmembrane region" description="Helical" evidence="1">
    <location>
        <begin position="176"/>
        <end position="196"/>
    </location>
</feature>
<feature type="transmembrane region" description="Helical" evidence="1">
    <location>
        <begin position="197"/>
        <end position="217"/>
    </location>
</feature>
<feature type="transmembrane region" description="Helical" evidence="1">
    <location>
        <begin position="222"/>
        <end position="242"/>
    </location>
</feature>
<name>COBS_NITV4</name>
<comment type="function">
    <text evidence="1">Joins adenosylcobinamide-GDP and alpha-ribazole to generate adenosylcobalamin (Ado-cobalamin). Also synthesizes adenosylcobalamin 5'-phosphate from adenosylcobinamide-GDP and alpha-ribazole 5'-phosphate.</text>
</comment>
<comment type="catalytic activity">
    <reaction evidence="1">
        <text>alpha-ribazole + adenosylcob(III)inamide-GDP = adenosylcob(III)alamin + GMP + H(+)</text>
        <dbReference type="Rhea" id="RHEA:16049"/>
        <dbReference type="ChEBI" id="CHEBI:10329"/>
        <dbReference type="ChEBI" id="CHEBI:15378"/>
        <dbReference type="ChEBI" id="CHEBI:18408"/>
        <dbReference type="ChEBI" id="CHEBI:58115"/>
        <dbReference type="ChEBI" id="CHEBI:60487"/>
        <dbReference type="EC" id="2.7.8.26"/>
    </reaction>
</comment>
<comment type="catalytic activity">
    <reaction evidence="1">
        <text>alpha-ribazole 5'-phosphate + adenosylcob(III)inamide-GDP = adenosylcob(III)alamin 5'-phosphate + GMP + H(+)</text>
        <dbReference type="Rhea" id="RHEA:23560"/>
        <dbReference type="ChEBI" id="CHEBI:15378"/>
        <dbReference type="ChEBI" id="CHEBI:57918"/>
        <dbReference type="ChEBI" id="CHEBI:58115"/>
        <dbReference type="ChEBI" id="CHEBI:60487"/>
        <dbReference type="ChEBI" id="CHEBI:60493"/>
        <dbReference type="EC" id="2.7.8.26"/>
    </reaction>
</comment>
<comment type="cofactor">
    <cofactor evidence="1">
        <name>Mg(2+)</name>
        <dbReference type="ChEBI" id="CHEBI:18420"/>
    </cofactor>
</comment>
<comment type="pathway">
    <text evidence="1">Cofactor biosynthesis; adenosylcobalamin biosynthesis; adenosylcobalamin from cob(II)yrinate a,c-diamide: step 7/7.</text>
</comment>
<comment type="subcellular location">
    <subcellularLocation>
        <location evidence="1">Cell inner membrane</location>
        <topology evidence="1">Multi-pass membrane protein</topology>
    </subcellularLocation>
</comment>
<comment type="similarity">
    <text evidence="1">Belongs to the CobS family.</text>
</comment>
<organism>
    <name type="scientific">Nitratidesulfovibrio vulgaris (strain DP4)</name>
    <name type="common">Desulfovibrio vulgaris</name>
    <dbReference type="NCBI Taxonomy" id="391774"/>
    <lineage>
        <taxon>Bacteria</taxon>
        <taxon>Pseudomonadati</taxon>
        <taxon>Thermodesulfobacteriota</taxon>
        <taxon>Desulfovibrionia</taxon>
        <taxon>Desulfovibrionales</taxon>
        <taxon>Desulfovibrionaceae</taxon>
        <taxon>Nitratidesulfovibrio</taxon>
    </lineage>
</organism>